<reference key="1">
    <citation type="journal article" date="2008" name="BMC Genomics">
        <title>The genome of Aeromonas salmonicida subsp. salmonicida A449: insights into the evolution of a fish pathogen.</title>
        <authorList>
            <person name="Reith M.E."/>
            <person name="Singh R.K."/>
            <person name="Curtis B."/>
            <person name="Boyd J.M."/>
            <person name="Bouevitch A."/>
            <person name="Kimball J."/>
            <person name="Munholland J."/>
            <person name="Murphy C."/>
            <person name="Sarty D."/>
            <person name="Williams J."/>
            <person name="Nash J.H."/>
            <person name="Johnson S.C."/>
            <person name="Brown L.L."/>
        </authorList>
    </citation>
    <scope>NUCLEOTIDE SEQUENCE [LARGE SCALE GENOMIC DNA]</scope>
    <source>
        <strain>A449</strain>
    </source>
</reference>
<proteinExistence type="inferred from homology"/>
<evidence type="ECO:0000255" key="1">
    <source>
        <dbReference type="HAMAP-Rule" id="MF_00514"/>
    </source>
</evidence>
<evidence type="ECO:0000305" key="2"/>
<protein>
    <recommendedName>
        <fullName evidence="1">Large ribosomal subunit protein bL35</fullName>
    </recommendedName>
    <alternativeName>
        <fullName evidence="2">50S ribosomal protein L35</fullName>
    </alternativeName>
</protein>
<keyword id="KW-0687">Ribonucleoprotein</keyword>
<keyword id="KW-0689">Ribosomal protein</keyword>
<gene>
    <name evidence="1" type="primary">rpmI</name>
    <name type="ordered locus">ASA_1955</name>
</gene>
<name>RL35_AERS4</name>
<dbReference type="EMBL" id="CP000644">
    <property type="protein sequence ID" value="ABO90028.1"/>
    <property type="molecule type" value="Genomic_DNA"/>
</dbReference>
<dbReference type="RefSeq" id="WP_005315535.1">
    <property type="nucleotide sequence ID" value="NC_009348.1"/>
</dbReference>
<dbReference type="SMR" id="A4SMA6"/>
<dbReference type="STRING" id="29491.GCA_000820065_03907"/>
<dbReference type="GeneID" id="97218763"/>
<dbReference type="KEGG" id="asa:ASA_1955"/>
<dbReference type="eggNOG" id="COG0291">
    <property type="taxonomic scope" value="Bacteria"/>
</dbReference>
<dbReference type="HOGENOM" id="CLU_169643_1_1_6"/>
<dbReference type="Proteomes" id="UP000000225">
    <property type="component" value="Chromosome"/>
</dbReference>
<dbReference type="GO" id="GO:0022625">
    <property type="term" value="C:cytosolic large ribosomal subunit"/>
    <property type="evidence" value="ECO:0007669"/>
    <property type="project" value="TreeGrafter"/>
</dbReference>
<dbReference type="GO" id="GO:0003735">
    <property type="term" value="F:structural constituent of ribosome"/>
    <property type="evidence" value="ECO:0007669"/>
    <property type="project" value="InterPro"/>
</dbReference>
<dbReference type="GO" id="GO:0006412">
    <property type="term" value="P:translation"/>
    <property type="evidence" value="ECO:0007669"/>
    <property type="project" value="UniProtKB-UniRule"/>
</dbReference>
<dbReference type="FunFam" id="4.10.410.60:FF:000001">
    <property type="entry name" value="50S ribosomal protein L35"/>
    <property type="match status" value="1"/>
</dbReference>
<dbReference type="Gene3D" id="4.10.410.60">
    <property type="match status" value="1"/>
</dbReference>
<dbReference type="HAMAP" id="MF_00514">
    <property type="entry name" value="Ribosomal_bL35"/>
    <property type="match status" value="1"/>
</dbReference>
<dbReference type="InterPro" id="IPR001706">
    <property type="entry name" value="Ribosomal_bL35"/>
</dbReference>
<dbReference type="InterPro" id="IPR021137">
    <property type="entry name" value="Ribosomal_bL35-like"/>
</dbReference>
<dbReference type="InterPro" id="IPR018265">
    <property type="entry name" value="Ribosomal_bL35_CS"/>
</dbReference>
<dbReference type="InterPro" id="IPR037229">
    <property type="entry name" value="Ribosomal_bL35_sf"/>
</dbReference>
<dbReference type="NCBIfam" id="TIGR00001">
    <property type="entry name" value="rpmI_bact"/>
    <property type="match status" value="1"/>
</dbReference>
<dbReference type="PANTHER" id="PTHR33343">
    <property type="entry name" value="54S RIBOSOMAL PROTEIN BL35M"/>
    <property type="match status" value="1"/>
</dbReference>
<dbReference type="PANTHER" id="PTHR33343:SF1">
    <property type="entry name" value="LARGE RIBOSOMAL SUBUNIT PROTEIN BL35M"/>
    <property type="match status" value="1"/>
</dbReference>
<dbReference type="Pfam" id="PF01632">
    <property type="entry name" value="Ribosomal_L35p"/>
    <property type="match status" value="1"/>
</dbReference>
<dbReference type="PRINTS" id="PR00064">
    <property type="entry name" value="RIBOSOMALL35"/>
</dbReference>
<dbReference type="SUPFAM" id="SSF143034">
    <property type="entry name" value="L35p-like"/>
    <property type="match status" value="1"/>
</dbReference>
<dbReference type="PROSITE" id="PS00936">
    <property type="entry name" value="RIBOSOMAL_L35"/>
    <property type="match status" value="1"/>
</dbReference>
<sequence>MPKMKTNRGAAKRFKKTGSGRFKCKHNHLRHILTKKSSKRKRKLGPKFMVSAADHKRVVACLPYA</sequence>
<organism>
    <name type="scientific">Aeromonas salmonicida (strain A449)</name>
    <dbReference type="NCBI Taxonomy" id="382245"/>
    <lineage>
        <taxon>Bacteria</taxon>
        <taxon>Pseudomonadati</taxon>
        <taxon>Pseudomonadota</taxon>
        <taxon>Gammaproteobacteria</taxon>
        <taxon>Aeromonadales</taxon>
        <taxon>Aeromonadaceae</taxon>
        <taxon>Aeromonas</taxon>
    </lineage>
</organism>
<accession>A4SMA6</accession>
<feature type="chain" id="PRO_1000050651" description="Large ribosomal subunit protein bL35">
    <location>
        <begin position="1"/>
        <end position="65"/>
    </location>
</feature>
<comment type="similarity">
    <text evidence="1">Belongs to the bacterial ribosomal protein bL35 family.</text>
</comment>